<keyword id="KW-0131">Cell cycle</keyword>
<keyword id="KW-0132">Cell division</keyword>
<keyword id="KW-0175">Coiled coil</keyword>
<keyword id="KW-0963">Cytoplasm</keyword>
<keyword id="KW-0717">Septation</keyword>
<dbReference type="EMBL" id="AM286415">
    <property type="protein sequence ID" value="CAL10243.1"/>
    <property type="molecule type" value="Genomic_DNA"/>
</dbReference>
<dbReference type="RefSeq" id="WP_004392238.1">
    <property type="nucleotide sequence ID" value="NC_008800.1"/>
</dbReference>
<dbReference type="RefSeq" id="YP_001004495.1">
    <property type="nucleotide sequence ID" value="NC_008800.1"/>
</dbReference>
<dbReference type="SMR" id="A1JI05"/>
<dbReference type="GeneID" id="97458257"/>
<dbReference type="KEGG" id="yen:YE0101"/>
<dbReference type="PATRIC" id="fig|393305.7.peg.191"/>
<dbReference type="eggNOG" id="COG3074">
    <property type="taxonomic scope" value="Bacteria"/>
</dbReference>
<dbReference type="HOGENOM" id="CLU_171174_2_0_6"/>
<dbReference type="OrthoDB" id="6554593at2"/>
<dbReference type="Proteomes" id="UP000000642">
    <property type="component" value="Chromosome"/>
</dbReference>
<dbReference type="GO" id="GO:0005737">
    <property type="term" value="C:cytoplasm"/>
    <property type="evidence" value="ECO:0007669"/>
    <property type="project" value="UniProtKB-SubCell"/>
</dbReference>
<dbReference type="GO" id="GO:0000917">
    <property type="term" value="P:division septum assembly"/>
    <property type="evidence" value="ECO:0007669"/>
    <property type="project" value="UniProtKB-KW"/>
</dbReference>
<dbReference type="GO" id="GO:0043093">
    <property type="term" value="P:FtsZ-dependent cytokinesis"/>
    <property type="evidence" value="ECO:0007669"/>
    <property type="project" value="UniProtKB-UniRule"/>
</dbReference>
<dbReference type="Gene3D" id="1.20.5.340">
    <property type="match status" value="1"/>
</dbReference>
<dbReference type="HAMAP" id="MF_01196">
    <property type="entry name" value="ZapB"/>
    <property type="match status" value="1"/>
</dbReference>
<dbReference type="InterPro" id="IPR009252">
    <property type="entry name" value="Cell_div_ZapB"/>
</dbReference>
<dbReference type="NCBIfam" id="NF011951">
    <property type="entry name" value="PRK15422.1"/>
    <property type="match status" value="1"/>
</dbReference>
<dbReference type="Pfam" id="PF06005">
    <property type="entry name" value="ZapB"/>
    <property type="match status" value="1"/>
</dbReference>
<reference key="1">
    <citation type="journal article" date="2006" name="PLoS Genet.">
        <title>The complete genome sequence and comparative genome analysis of the high pathogenicity Yersinia enterocolitica strain 8081.</title>
        <authorList>
            <person name="Thomson N.R."/>
            <person name="Howard S."/>
            <person name="Wren B.W."/>
            <person name="Holden M.T.G."/>
            <person name="Crossman L."/>
            <person name="Challis G.L."/>
            <person name="Churcher C."/>
            <person name="Mungall K."/>
            <person name="Brooks K."/>
            <person name="Chillingworth T."/>
            <person name="Feltwell T."/>
            <person name="Abdellah Z."/>
            <person name="Hauser H."/>
            <person name="Jagels K."/>
            <person name="Maddison M."/>
            <person name="Moule S."/>
            <person name="Sanders M."/>
            <person name="Whitehead S."/>
            <person name="Quail M.A."/>
            <person name="Dougan G."/>
            <person name="Parkhill J."/>
            <person name="Prentice M.B."/>
        </authorList>
    </citation>
    <scope>NUCLEOTIDE SEQUENCE [LARGE SCALE GENOMIC DNA]</scope>
    <source>
        <strain>NCTC 13174 / 8081</strain>
    </source>
</reference>
<comment type="function">
    <text evidence="1">Non-essential, abundant cell division factor that is required for proper Z-ring formation. It is recruited early to the divisome by direct interaction with FtsZ, stimulating Z-ring assembly and thereby promoting cell division earlier in the cell cycle. Its recruitment to the Z-ring requires functional FtsA or ZipA.</text>
</comment>
<comment type="subunit">
    <text evidence="1">Homodimer. The ends of the coiled-coil dimer bind to each other, forming polymers. Interacts with FtsZ.</text>
</comment>
<comment type="subcellular location">
    <subcellularLocation>
        <location>Cytoplasm</location>
    </subcellularLocation>
    <text evidence="1">Localizes to the septum at mid-cell, in a FtsZ-like pattern.</text>
</comment>
<comment type="similarity">
    <text evidence="1">Belongs to the ZapB family.</text>
</comment>
<feature type="chain" id="PRO_0000333945" description="Cell division protein ZapB">
    <location>
        <begin position="1"/>
        <end position="79"/>
    </location>
</feature>
<feature type="coiled-coil region" evidence="1">
    <location>
        <begin position="6"/>
        <end position="78"/>
    </location>
</feature>
<evidence type="ECO:0000255" key="1">
    <source>
        <dbReference type="HAMAP-Rule" id="MF_01196"/>
    </source>
</evidence>
<organism>
    <name type="scientific">Yersinia enterocolitica serotype O:8 / biotype 1B (strain NCTC 13174 / 8081)</name>
    <dbReference type="NCBI Taxonomy" id="393305"/>
    <lineage>
        <taxon>Bacteria</taxon>
        <taxon>Pseudomonadati</taxon>
        <taxon>Pseudomonadota</taxon>
        <taxon>Gammaproteobacteria</taxon>
        <taxon>Enterobacterales</taxon>
        <taxon>Yersiniaceae</taxon>
        <taxon>Yersinia</taxon>
    </lineage>
</organism>
<protein>
    <recommendedName>
        <fullName evidence="1">Cell division protein ZapB</fullName>
    </recommendedName>
</protein>
<name>ZAPB_YERE8</name>
<accession>A1JI05</accession>
<gene>
    <name evidence="1" type="primary">zapB</name>
    <name type="ordered locus">YE0101</name>
</gene>
<sequence>MSFEVFEKLEVKVQQAIDTITLLQMEIEELKEKNNTLSQEVQEAAGGREALVRENEQLKQEQHVWQDRLRALLGKMEEV</sequence>
<proteinExistence type="inferred from homology"/>